<dbReference type="EC" id="2.5.1.75" evidence="1"/>
<dbReference type="EMBL" id="CP000555">
    <property type="protein sequence ID" value="ABM94992.1"/>
    <property type="molecule type" value="Genomic_DNA"/>
</dbReference>
<dbReference type="RefSeq" id="WP_011829629.1">
    <property type="nucleotide sequence ID" value="NC_008825.1"/>
</dbReference>
<dbReference type="SMR" id="A2SHF3"/>
<dbReference type="STRING" id="420662.Mpe_A2034"/>
<dbReference type="KEGG" id="mpt:Mpe_A2034"/>
<dbReference type="eggNOG" id="COG0324">
    <property type="taxonomic scope" value="Bacteria"/>
</dbReference>
<dbReference type="HOGENOM" id="CLU_032616_0_0_4"/>
<dbReference type="Proteomes" id="UP000000366">
    <property type="component" value="Chromosome"/>
</dbReference>
<dbReference type="GO" id="GO:0005524">
    <property type="term" value="F:ATP binding"/>
    <property type="evidence" value="ECO:0007669"/>
    <property type="project" value="UniProtKB-UniRule"/>
</dbReference>
<dbReference type="GO" id="GO:0052381">
    <property type="term" value="F:tRNA dimethylallyltransferase activity"/>
    <property type="evidence" value="ECO:0007669"/>
    <property type="project" value="UniProtKB-UniRule"/>
</dbReference>
<dbReference type="GO" id="GO:0006400">
    <property type="term" value="P:tRNA modification"/>
    <property type="evidence" value="ECO:0007669"/>
    <property type="project" value="TreeGrafter"/>
</dbReference>
<dbReference type="FunFam" id="1.10.20.140:FF:000001">
    <property type="entry name" value="tRNA dimethylallyltransferase"/>
    <property type="match status" value="1"/>
</dbReference>
<dbReference type="Gene3D" id="1.10.20.140">
    <property type="match status" value="1"/>
</dbReference>
<dbReference type="Gene3D" id="3.40.50.300">
    <property type="entry name" value="P-loop containing nucleotide triphosphate hydrolases"/>
    <property type="match status" value="1"/>
</dbReference>
<dbReference type="HAMAP" id="MF_00185">
    <property type="entry name" value="IPP_trans"/>
    <property type="match status" value="1"/>
</dbReference>
<dbReference type="InterPro" id="IPR039657">
    <property type="entry name" value="Dimethylallyltransferase"/>
</dbReference>
<dbReference type="InterPro" id="IPR018022">
    <property type="entry name" value="IPT"/>
</dbReference>
<dbReference type="InterPro" id="IPR027417">
    <property type="entry name" value="P-loop_NTPase"/>
</dbReference>
<dbReference type="NCBIfam" id="TIGR00174">
    <property type="entry name" value="miaA"/>
    <property type="match status" value="1"/>
</dbReference>
<dbReference type="PANTHER" id="PTHR11088">
    <property type="entry name" value="TRNA DIMETHYLALLYLTRANSFERASE"/>
    <property type="match status" value="1"/>
</dbReference>
<dbReference type="PANTHER" id="PTHR11088:SF60">
    <property type="entry name" value="TRNA DIMETHYLALLYLTRANSFERASE"/>
    <property type="match status" value="1"/>
</dbReference>
<dbReference type="Pfam" id="PF01715">
    <property type="entry name" value="IPPT"/>
    <property type="match status" value="1"/>
</dbReference>
<dbReference type="SUPFAM" id="SSF52540">
    <property type="entry name" value="P-loop containing nucleoside triphosphate hydrolases"/>
    <property type="match status" value="1"/>
</dbReference>
<accession>A2SHF3</accession>
<gene>
    <name evidence="1" type="primary">miaA</name>
    <name type="ordered locus">Mpe_A2034</name>
</gene>
<comment type="function">
    <text evidence="1">Catalyzes the transfer of a dimethylallyl group onto the adenine at position 37 in tRNAs that read codons beginning with uridine, leading to the formation of N6-(dimethylallyl)adenosine (i(6)A).</text>
</comment>
<comment type="catalytic activity">
    <reaction evidence="1">
        <text>adenosine(37) in tRNA + dimethylallyl diphosphate = N(6)-dimethylallyladenosine(37) in tRNA + diphosphate</text>
        <dbReference type="Rhea" id="RHEA:26482"/>
        <dbReference type="Rhea" id="RHEA-COMP:10162"/>
        <dbReference type="Rhea" id="RHEA-COMP:10375"/>
        <dbReference type="ChEBI" id="CHEBI:33019"/>
        <dbReference type="ChEBI" id="CHEBI:57623"/>
        <dbReference type="ChEBI" id="CHEBI:74411"/>
        <dbReference type="ChEBI" id="CHEBI:74415"/>
        <dbReference type="EC" id="2.5.1.75"/>
    </reaction>
</comment>
<comment type="cofactor">
    <cofactor evidence="1">
        <name>Mg(2+)</name>
        <dbReference type="ChEBI" id="CHEBI:18420"/>
    </cofactor>
</comment>
<comment type="subunit">
    <text evidence="1">Monomer.</text>
</comment>
<comment type="similarity">
    <text evidence="1">Belongs to the IPP transferase family.</text>
</comment>
<proteinExistence type="inferred from homology"/>
<keyword id="KW-0067">ATP-binding</keyword>
<keyword id="KW-0460">Magnesium</keyword>
<keyword id="KW-0547">Nucleotide-binding</keyword>
<keyword id="KW-1185">Reference proteome</keyword>
<keyword id="KW-0808">Transferase</keyword>
<keyword id="KW-0819">tRNA processing</keyword>
<feature type="chain" id="PRO_0000377218" description="tRNA dimethylallyltransferase">
    <location>
        <begin position="1"/>
        <end position="327"/>
    </location>
</feature>
<feature type="region of interest" description="Interaction with substrate tRNA" evidence="1">
    <location>
        <begin position="43"/>
        <end position="46"/>
    </location>
</feature>
<feature type="region of interest" description="Interaction with substrate tRNA" evidence="1">
    <location>
        <begin position="167"/>
        <end position="171"/>
    </location>
</feature>
<feature type="region of interest" description="Interaction with substrate tRNA" evidence="1">
    <location>
        <begin position="251"/>
        <end position="256"/>
    </location>
</feature>
<feature type="binding site" evidence="1">
    <location>
        <begin position="18"/>
        <end position="25"/>
    </location>
    <ligand>
        <name>ATP</name>
        <dbReference type="ChEBI" id="CHEBI:30616"/>
    </ligand>
</feature>
<feature type="binding site" evidence="1">
    <location>
        <begin position="20"/>
        <end position="25"/>
    </location>
    <ligand>
        <name>substrate</name>
    </ligand>
</feature>
<feature type="site" description="Interaction with substrate tRNA" evidence="1">
    <location>
        <position position="109"/>
    </location>
</feature>
<feature type="site" description="Interaction with substrate tRNA" evidence="1">
    <location>
        <position position="131"/>
    </location>
</feature>
<reference key="1">
    <citation type="journal article" date="2007" name="J. Bacteriol.">
        <title>Whole-genome analysis of the methyl tert-butyl ether-degrading beta-proteobacterium Methylibium petroleiphilum PM1.</title>
        <authorList>
            <person name="Kane S.R."/>
            <person name="Chakicherla A.Y."/>
            <person name="Chain P.S.G."/>
            <person name="Schmidt R."/>
            <person name="Shin M.W."/>
            <person name="Legler T.C."/>
            <person name="Scow K.M."/>
            <person name="Larimer F.W."/>
            <person name="Lucas S.M."/>
            <person name="Richardson P.M."/>
            <person name="Hristova K.R."/>
        </authorList>
    </citation>
    <scope>NUCLEOTIDE SEQUENCE [LARGE SCALE GENOMIC DNA]</scope>
    <source>
        <strain>ATCC BAA-1232 / LMG 22953 / PM1</strain>
    </source>
</reference>
<name>MIAA_METPP</name>
<protein>
    <recommendedName>
        <fullName evidence="1">tRNA dimethylallyltransferase</fullName>
        <ecNumber evidence="1">2.5.1.75</ecNumber>
    </recommendedName>
    <alternativeName>
        <fullName evidence="1">Dimethylallyl diphosphate:tRNA dimethylallyltransferase</fullName>
        <shortName evidence="1">DMAPP:tRNA dimethylallyltransferase</shortName>
        <shortName evidence="1">DMATase</shortName>
    </alternativeName>
    <alternativeName>
        <fullName evidence="1">Isopentenyl-diphosphate:tRNA isopentenyltransferase</fullName>
        <shortName evidence="1">IPP transferase</shortName>
        <shortName evidence="1">IPPT</shortName>
        <shortName evidence="1">IPTase</shortName>
    </alternativeName>
</protein>
<evidence type="ECO:0000255" key="1">
    <source>
        <dbReference type="HAMAP-Rule" id="MF_00185"/>
    </source>
</evidence>
<organism>
    <name type="scientific">Methylibium petroleiphilum (strain ATCC BAA-1232 / LMG 22953 / PM1)</name>
    <dbReference type="NCBI Taxonomy" id="420662"/>
    <lineage>
        <taxon>Bacteria</taxon>
        <taxon>Pseudomonadati</taxon>
        <taxon>Pseudomonadota</taxon>
        <taxon>Betaproteobacteria</taxon>
        <taxon>Burkholderiales</taxon>
        <taxon>Sphaerotilaceae</taxon>
        <taxon>Methylibium</taxon>
    </lineage>
</organism>
<sequence>MSVASPAAAGLDTLCLAGPTASGKTAAALALAQVLPVEVVSVDSALVYRGMDIGTAKPSAAERALVPHHLIDLIEPCAAYSAAQFVADARRAMAEIRARGRLPLLVGGTMLYFKALFDGIDALPPADPALRAALDAEARTRGWPALHAELATVDPVTAARLAPNDAQRVQRALEVWRATGQPLSSFHSGRFDVASAAPPRTALISLEPTDRGWLHARIGERFAAMLQAGLVDEVRRLRARGDLHADLPAMRCVGYRQAWAALDAGDPPDLARLQAEGAAATRQLAKRQLTWLRGMPWRRTVACDAPDASAQVVALARQLVDEREAAA</sequence>